<organism>
    <name type="scientific">Phytophthora infestans (strain T30-4)</name>
    <name type="common">Potato late blight agent</name>
    <dbReference type="NCBI Taxonomy" id="403677"/>
    <lineage>
        <taxon>Eukaryota</taxon>
        <taxon>Sar</taxon>
        <taxon>Stramenopiles</taxon>
        <taxon>Oomycota</taxon>
        <taxon>Peronosporales</taxon>
        <taxon>Peronosporaceae</taxon>
        <taxon>Phytophthora</taxon>
    </lineage>
</organism>
<evidence type="ECO:0000255" key="1"/>
<evidence type="ECO:0000269" key="2">
    <source>
    </source>
</evidence>
<evidence type="ECO:0000269" key="3">
    <source>
    </source>
</evidence>
<evidence type="ECO:0000269" key="4">
    <source>
    </source>
</evidence>
<evidence type="ECO:0000269" key="5">
    <source>
    </source>
</evidence>
<evidence type="ECO:0000303" key="6">
    <source>
    </source>
</evidence>
<evidence type="ECO:0000305" key="7"/>
<evidence type="ECO:0000305" key="8">
    <source>
    </source>
</evidence>
<protein>
    <recommendedName>
        <fullName evidence="6">RxLR effector protein PITG_15110</fullName>
    </recommendedName>
</protein>
<dbReference type="EMBL" id="DS028155">
    <property type="protein sequence ID" value="EEY63393.1"/>
    <property type="molecule type" value="Genomic_DNA"/>
</dbReference>
<dbReference type="RefSeq" id="XP_002898278.1">
    <property type="nucleotide sequence ID" value="XM_002898232.1"/>
</dbReference>
<dbReference type="SMR" id="D0NRP3"/>
<dbReference type="STRING" id="403677.D0NRP3"/>
<dbReference type="EnsemblProtists" id="PITG_15110T0">
    <property type="protein sequence ID" value="PITG_15110T0"/>
    <property type="gene ID" value="PITG_15110"/>
</dbReference>
<dbReference type="GeneID" id="9475997"/>
<dbReference type="KEGG" id="pif:PITG_15110"/>
<dbReference type="VEuPathDB" id="FungiDB:PITG_15110"/>
<dbReference type="eggNOG" id="ENOG502SRJH">
    <property type="taxonomic scope" value="Eukaryota"/>
</dbReference>
<dbReference type="HOGENOM" id="CLU_021192_3_0_1"/>
<dbReference type="InParanoid" id="D0NRP3"/>
<dbReference type="OMA" id="NTRRMAN"/>
<dbReference type="OrthoDB" id="99743at2759"/>
<dbReference type="Proteomes" id="UP000006643">
    <property type="component" value="Partially assembled WGS sequence"/>
</dbReference>
<dbReference type="GO" id="GO:0005576">
    <property type="term" value="C:extracellular region"/>
    <property type="evidence" value="ECO:0007669"/>
    <property type="project" value="UniProtKB-SubCell"/>
</dbReference>
<dbReference type="GO" id="GO:0030430">
    <property type="term" value="C:host cell cytoplasm"/>
    <property type="evidence" value="ECO:0007669"/>
    <property type="project" value="UniProtKB-KW"/>
</dbReference>
<dbReference type="GO" id="GO:0044163">
    <property type="term" value="C:host cytoskeleton"/>
    <property type="evidence" value="ECO:0007669"/>
    <property type="project" value="UniProtKB-SubCell"/>
</dbReference>
<sequence length="709" mass="79039">MHAYSAAVLMGLLMVAEGAYVSTTACAHSAPNPTIQRYEPESIPTRLAPNRLLREPETTEASNEDRVVSIHAGIEKLSDLIKTGVSKVHGYLNLGPSATRDQPADEILRIYKLDDGIEKALVSPNLKAMESHVKELSTKNRKSEASVIGILTSHYGDDAVAKALVTAQKTVQSDDDVKTIWRLRNAQLSSWFSSDKSVDDVFTLLKLRHDDYLALASPKMEVLDDYMKLINRVTSGQETLLNVLTKGFGGEQTMAKLLLRGKEEPQTRELATALQNALLNKWVTDKFQPESVLKKLKLDRDLMNALSDPTRHTLTSYIAVFNTRNPGKKASFIGTLSAHYGDEMVANVLIAASRNGNTRRMANQLRTDQLSDWLNNQKSADEVFSLLKLRADLPNIDGALASGKLKLLEDYIKLFNREKAGDETLLKTLTTGFDGESNLAKALLTAEINPHSNKMVVKLQGELLNQWLLKGLKPESVLKNLGLDRGMKEVLSDPNRHFLTKYIWEYNSRNRFDRTSLILTLSAHYGDDVVARALAVAKGDSGLARTAAILQRQQLEGWLSSGKSADDVFTLLRIGADDFLPLNSQNLETLEDFVWLLNLKNRRIQTNIFTVVENKFGGDVQLARAVVKALNEADERGLRDSVGIASRYRSKLFGRWFDKSIEPKDVYAMILKVNGASADALEKSIVSRYTAFYKKRLAKAFTFDSPRRL</sequence>
<keyword id="KW-1035">Host cytoplasm</keyword>
<keyword id="KW-1037">Host cytoskeleton</keyword>
<keyword id="KW-1185">Reference proteome</keyword>
<keyword id="KW-0964">Secreted</keyword>
<keyword id="KW-0732">Signal</keyword>
<keyword id="KW-0843">Virulence</keyword>
<reference key="1">
    <citation type="journal article" date="2009" name="Nature">
        <title>Genome sequence and analysis of the Irish potato famine pathogen Phytophthora infestans.</title>
        <authorList>
            <consortium name="The Broad Institute Genome Sequencing Platform"/>
            <person name="Haas B.J."/>
            <person name="Kamoun S."/>
            <person name="Zody M.C."/>
            <person name="Jiang R.H."/>
            <person name="Handsaker R.E."/>
            <person name="Cano L.M."/>
            <person name="Grabherr M."/>
            <person name="Kodira C.D."/>
            <person name="Raffaele S."/>
            <person name="Torto-Alalibo T."/>
            <person name="Bozkurt T.O."/>
            <person name="Ah-Fong A.M."/>
            <person name="Alvarado L."/>
            <person name="Anderson V.L."/>
            <person name="Armstrong M.R."/>
            <person name="Avrova A."/>
            <person name="Baxter L."/>
            <person name="Beynon J."/>
            <person name="Boevink P.C."/>
            <person name="Bollmann S.R."/>
            <person name="Bos J.I."/>
            <person name="Bulone V."/>
            <person name="Cai G."/>
            <person name="Cakir C."/>
            <person name="Carrington J.C."/>
            <person name="Chawner M."/>
            <person name="Conti L."/>
            <person name="Costanzo S."/>
            <person name="Ewan R."/>
            <person name="Fahlgren N."/>
            <person name="Fischbach M.A."/>
            <person name="Fugelstad J."/>
            <person name="Gilroy E.M."/>
            <person name="Gnerre S."/>
            <person name="Green P.J."/>
            <person name="Grenville-Briggs L.J."/>
            <person name="Griffith J."/>
            <person name="Grunwald N.J."/>
            <person name="Horn K."/>
            <person name="Horner N.R."/>
            <person name="Hu C.H."/>
            <person name="Huitema E."/>
            <person name="Jeong D.H."/>
            <person name="Jones A.M."/>
            <person name="Jones J.D."/>
            <person name="Jones R.W."/>
            <person name="Karlsson E.K."/>
            <person name="Kunjeti S.G."/>
            <person name="Lamour K."/>
            <person name="Liu Z."/>
            <person name="Ma L."/>
            <person name="Maclean D."/>
            <person name="Chibucos M.C."/>
            <person name="McDonald H."/>
            <person name="McWalters J."/>
            <person name="Meijer H.J."/>
            <person name="Morgan W."/>
            <person name="Morris P.F."/>
            <person name="Munro C.A."/>
            <person name="O'Neill K."/>
            <person name="Ospina-Giraldo M."/>
            <person name="Pinzon A."/>
            <person name="Pritchard L."/>
            <person name="Ramsahoye B."/>
            <person name="Ren Q."/>
            <person name="Restrepo S."/>
            <person name="Roy S."/>
            <person name="Sadanandom A."/>
            <person name="Savidor A."/>
            <person name="Schornack S."/>
            <person name="Schwartz D.C."/>
            <person name="Schumann U.D."/>
            <person name="Schwessinger B."/>
            <person name="Seyer L."/>
            <person name="Sharpe T."/>
            <person name="Silvar C."/>
            <person name="Song J."/>
            <person name="Studholme D.J."/>
            <person name="Sykes S."/>
            <person name="Thines M."/>
            <person name="van de Vondervoort P.J."/>
            <person name="Phuntumart V."/>
            <person name="Wawra S."/>
            <person name="Weide R."/>
            <person name="Win J."/>
            <person name="Young C."/>
            <person name="Zhou S."/>
            <person name="Fry W."/>
            <person name="Meyers B.C."/>
            <person name="van West P."/>
            <person name="Ristaino J."/>
            <person name="Govers F."/>
            <person name="Birch P.R."/>
            <person name="Whisson S.C."/>
            <person name="Judelson H.S."/>
            <person name="Nusbaum C."/>
        </authorList>
    </citation>
    <scope>NUCLEOTIDE SEQUENCE [LARGE SCALE GENOMIC DNA]</scope>
    <scope>INDUCTION</scope>
    <source>
        <strain>T30-4</strain>
    </source>
</reference>
<reference key="2">
    <citation type="journal article" date="2017" name="BMC Genomics">
        <title>RNA-seq of life stages of the oomycete Phytophthora infestans reveals dynamic changes in metabolic, signal transduction, and pathogenesis genes and a major role for calcium signaling in development.</title>
        <authorList>
            <person name="Ah-Fong A.M."/>
            <person name="Kim K.S."/>
            <person name="Judelson H.S."/>
        </authorList>
    </citation>
    <scope>INDUCTION</scope>
</reference>
<reference key="3">
    <citation type="journal article" date="2017" name="Front. Plant Sci.">
        <title>Conserved RXLR effector genes of Phytophthora infestans expressed at the early stage of potato infection are suppressive to host defense.</title>
        <authorList>
            <person name="Yin J."/>
            <person name="Gu B."/>
            <person name="Huang G."/>
            <person name="Tian Y."/>
            <person name="Quan J."/>
            <person name="Lindqvist-Kreuze H."/>
            <person name="Shan W."/>
        </authorList>
    </citation>
    <scope>INDUCTION</scope>
    <scope>DOMAIN</scope>
</reference>
<reference key="4">
    <citation type="journal article" date="2019" name="J. Exp. Bot.">
        <title>Phytophthora infestans RXLR effectors act in concert at diverse subcellular locations to enhance host colonization.</title>
        <authorList>
            <person name="Wang S."/>
            <person name="McLellan H."/>
            <person name="Bukharova T."/>
            <person name="He Q."/>
            <person name="Murphy F."/>
            <person name="Shi J."/>
            <person name="Sun S."/>
            <person name="van Weymers P."/>
            <person name="Ren Y."/>
            <person name="Thilliez G."/>
            <person name="Wang H."/>
            <person name="Chen X."/>
            <person name="Engelhardt S."/>
            <person name="Vleeshouwers V."/>
            <person name="Gilroy E.M."/>
            <person name="Whisson S.C."/>
            <person name="Hein I."/>
            <person name="Wang X."/>
            <person name="Tian Z."/>
            <person name="Birch P.R.J."/>
            <person name="Boevink P.C."/>
        </authorList>
    </citation>
    <scope>FUNCTION</scope>
    <scope>SUBCELLULAR LOCATION</scope>
</reference>
<proteinExistence type="evidence at transcript level"/>
<name>RXLRQ_PHYIT</name>
<accession>D0NRP3</accession>
<comment type="function">
    <text evidence="5">Effector that enhances P.infestans colonization of Nicotiana benthamiana leaves.</text>
</comment>
<comment type="subcellular location">
    <subcellularLocation>
        <location evidence="5">Secreted</location>
    </subcellularLocation>
    <subcellularLocation>
        <location>Host cytoplasm</location>
        <location>Host cytoskeleton</location>
    </subcellularLocation>
    <text evidence="5">Associates with host microtubules.</text>
</comment>
<comment type="induction">
    <text evidence="2 3 4">Expression is induced during host plant infection.</text>
</comment>
<comment type="domain">
    <text evidence="8">The RxLR-dEER motif acts to carry the protein into the host cell cytoplasm through binding to cell surface phosphatidylinositol-3-phosphate.</text>
</comment>
<comment type="similarity">
    <text evidence="7">Belongs to the RxLR effector family.</text>
</comment>
<gene>
    <name type="ORF">PITG_15110</name>
</gene>
<feature type="signal peptide" evidence="1">
    <location>
        <begin position="1"/>
        <end position="18"/>
    </location>
</feature>
<feature type="chain" id="PRO_5003012319" description="RxLR effector protein PITG_15110">
    <location>
        <begin position="19"/>
        <end position="709"/>
    </location>
</feature>
<feature type="short sequence motif" description="RxLR-dEER" evidence="8">
    <location>
        <begin position="51"/>
        <end position="66"/>
    </location>
</feature>